<gene>
    <name type="primary">recF</name>
    <name type="ordered locus">sll1277</name>
</gene>
<organism>
    <name type="scientific">Synechocystis sp. (strain ATCC 27184 / PCC 6803 / Kazusa)</name>
    <dbReference type="NCBI Taxonomy" id="1111708"/>
    <lineage>
        <taxon>Bacteria</taxon>
        <taxon>Bacillati</taxon>
        <taxon>Cyanobacteriota</taxon>
        <taxon>Cyanophyceae</taxon>
        <taxon>Synechococcales</taxon>
        <taxon>Merismopediaceae</taxon>
        <taxon>Synechocystis</taxon>
    </lineage>
</organism>
<feature type="chain" id="PRO_0000196480" description="DNA replication and repair protein RecF">
    <location>
        <begin position="1"/>
        <end position="384"/>
    </location>
</feature>
<feature type="binding site" evidence="2">
    <location>
        <begin position="30"/>
        <end position="37"/>
    </location>
    <ligand>
        <name>ATP</name>
        <dbReference type="ChEBI" id="CHEBI:30616"/>
    </ligand>
</feature>
<proteinExistence type="inferred from homology"/>
<dbReference type="EMBL" id="BA000022">
    <property type="protein sequence ID" value="BAA17572.1"/>
    <property type="molecule type" value="Genomic_DNA"/>
</dbReference>
<dbReference type="PIR" id="S77238">
    <property type="entry name" value="S77238"/>
</dbReference>
<dbReference type="SMR" id="P73532"/>
<dbReference type="FunCoup" id="P73532">
    <property type="interactions" value="201"/>
</dbReference>
<dbReference type="IntAct" id="P73532">
    <property type="interactions" value="3"/>
</dbReference>
<dbReference type="STRING" id="1148.gene:10498439"/>
<dbReference type="PaxDb" id="1148-1652652"/>
<dbReference type="EnsemblBacteria" id="BAA17572">
    <property type="protein sequence ID" value="BAA17572"/>
    <property type="gene ID" value="BAA17572"/>
</dbReference>
<dbReference type="KEGG" id="syn:sll1277"/>
<dbReference type="eggNOG" id="COG1195">
    <property type="taxonomic scope" value="Bacteria"/>
</dbReference>
<dbReference type="InParanoid" id="P73532"/>
<dbReference type="PhylomeDB" id="P73532"/>
<dbReference type="Proteomes" id="UP000001425">
    <property type="component" value="Chromosome"/>
</dbReference>
<dbReference type="GO" id="GO:0005737">
    <property type="term" value="C:cytoplasm"/>
    <property type="evidence" value="ECO:0007669"/>
    <property type="project" value="UniProtKB-SubCell"/>
</dbReference>
<dbReference type="GO" id="GO:0005524">
    <property type="term" value="F:ATP binding"/>
    <property type="evidence" value="ECO:0007669"/>
    <property type="project" value="UniProtKB-UniRule"/>
</dbReference>
<dbReference type="GO" id="GO:0003697">
    <property type="term" value="F:single-stranded DNA binding"/>
    <property type="evidence" value="ECO:0007669"/>
    <property type="project" value="UniProtKB-UniRule"/>
</dbReference>
<dbReference type="GO" id="GO:0006260">
    <property type="term" value="P:DNA replication"/>
    <property type="evidence" value="ECO:0007669"/>
    <property type="project" value="UniProtKB-UniRule"/>
</dbReference>
<dbReference type="GO" id="GO:0000731">
    <property type="term" value="P:DNA synthesis involved in DNA repair"/>
    <property type="evidence" value="ECO:0000318"/>
    <property type="project" value="GO_Central"/>
</dbReference>
<dbReference type="GO" id="GO:0006302">
    <property type="term" value="P:double-strand break repair"/>
    <property type="evidence" value="ECO:0000318"/>
    <property type="project" value="GO_Central"/>
</dbReference>
<dbReference type="GO" id="GO:0009432">
    <property type="term" value="P:SOS response"/>
    <property type="evidence" value="ECO:0007669"/>
    <property type="project" value="UniProtKB-UniRule"/>
</dbReference>
<dbReference type="CDD" id="cd03242">
    <property type="entry name" value="ABC_RecF"/>
    <property type="match status" value="1"/>
</dbReference>
<dbReference type="FunFam" id="1.20.1050.90:FF:000002">
    <property type="entry name" value="DNA replication and repair protein RecF"/>
    <property type="match status" value="1"/>
</dbReference>
<dbReference type="Gene3D" id="3.40.50.300">
    <property type="entry name" value="P-loop containing nucleotide triphosphate hydrolases"/>
    <property type="match status" value="1"/>
</dbReference>
<dbReference type="Gene3D" id="1.20.1050.90">
    <property type="entry name" value="RecF/RecN/SMC, N-terminal domain"/>
    <property type="match status" value="1"/>
</dbReference>
<dbReference type="HAMAP" id="MF_00365">
    <property type="entry name" value="RecF"/>
    <property type="match status" value="1"/>
</dbReference>
<dbReference type="InterPro" id="IPR001238">
    <property type="entry name" value="DNA-binding_RecF"/>
</dbReference>
<dbReference type="InterPro" id="IPR018078">
    <property type="entry name" value="DNA-binding_RecF_CS"/>
</dbReference>
<dbReference type="InterPro" id="IPR027417">
    <property type="entry name" value="P-loop_NTPase"/>
</dbReference>
<dbReference type="InterPro" id="IPR003395">
    <property type="entry name" value="RecF/RecN/SMC_N"/>
</dbReference>
<dbReference type="InterPro" id="IPR042174">
    <property type="entry name" value="RecF_2"/>
</dbReference>
<dbReference type="NCBIfam" id="TIGR00611">
    <property type="entry name" value="recf"/>
    <property type="match status" value="1"/>
</dbReference>
<dbReference type="PANTHER" id="PTHR32182">
    <property type="entry name" value="DNA REPLICATION AND REPAIR PROTEIN RECF"/>
    <property type="match status" value="1"/>
</dbReference>
<dbReference type="PANTHER" id="PTHR32182:SF0">
    <property type="entry name" value="DNA REPLICATION AND REPAIR PROTEIN RECF"/>
    <property type="match status" value="1"/>
</dbReference>
<dbReference type="Pfam" id="PF02463">
    <property type="entry name" value="SMC_N"/>
    <property type="match status" value="1"/>
</dbReference>
<dbReference type="SUPFAM" id="SSF52540">
    <property type="entry name" value="P-loop containing nucleoside triphosphate hydrolases"/>
    <property type="match status" value="1"/>
</dbReference>
<dbReference type="PROSITE" id="PS00617">
    <property type="entry name" value="RECF_1"/>
    <property type="match status" value="1"/>
</dbReference>
<dbReference type="PROSITE" id="PS00618">
    <property type="entry name" value="RECF_2"/>
    <property type="match status" value="1"/>
</dbReference>
<name>RECF_SYNY3</name>
<keyword id="KW-0067">ATP-binding</keyword>
<keyword id="KW-0963">Cytoplasm</keyword>
<keyword id="KW-0235">DNA replication</keyword>
<keyword id="KW-0238">DNA-binding</keyword>
<keyword id="KW-0547">Nucleotide-binding</keyword>
<keyword id="KW-1185">Reference proteome</keyword>
<protein>
    <recommendedName>
        <fullName>DNA replication and repair protein RecF</fullName>
    </recommendedName>
</protein>
<sequence length="384" mass="43744">MYLKKLYLRAFRNYLEEEVEFSAQKTILVGNNAQGKSNLLEAVELLATLKSHRTSRDQELVLDGAANGQIKALLERQYSVAELEIDLRRSGRRNLRINQNQCRRQLDFLGCLNAVEFSCLDLDLVRGAPDCRRQWLDTLLTQLEPLYAHLLGQYQHIVKQRNALLKSLRQQWETGLALGEESTASLSLWDQQLVEMGTRVVRRRARGLARLAPLAQEWHGRISGGNETLTVTYQPNVTWVGDDPEVVHQAFLEKLAQRRSAELHLGTTVVGPHRDEVGFVLDDTPARTYGSQGQQRTLVLALKLAELSLIETVIGEPPLLLLDDVLAELDLDRQGQLLMAIEDRFQTLITTTHLSRFDDRWRRSAQILKVNAGQLEERWPSEID</sequence>
<evidence type="ECO:0000250" key="1"/>
<evidence type="ECO:0000255" key="2"/>
<evidence type="ECO:0000305" key="3"/>
<evidence type="ECO:0000305" key="4">
    <source>
    </source>
</evidence>
<reference key="1">
    <citation type="journal article" date="1996" name="DNA Res.">
        <title>Sequence analysis of the genome of the unicellular cyanobacterium Synechocystis sp. strain PCC6803. II. Sequence determination of the entire genome and assignment of potential protein-coding regions.</title>
        <authorList>
            <person name="Kaneko T."/>
            <person name="Sato S."/>
            <person name="Kotani H."/>
            <person name="Tanaka A."/>
            <person name="Asamizu E."/>
            <person name="Nakamura Y."/>
            <person name="Miyajima N."/>
            <person name="Hirosawa M."/>
            <person name="Sugiura M."/>
            <person name="Sasamoto S."/>
            <person name="Kimura T."/>
            <person name="Hosouchi T."/>
            <person name="Matsuno A."/>
            <person name="Muraki A."/>
            <person name="Nakazaki N."/>
            <person name="Naruo K."/>
            <person name="Okumura S."/>
            <person name="Shimpo S."/>
            <person name="Takeuchi C."/>
            <person name="Wada T."/>
            <person name="Watanabe A."/>
            <person name="Yamada M."/>
            <person name="Yasuda M."/>
            <person name="Tabata S."/>
        </authorList>
    </citation>
    <scope>NUCLEOTIDE SEQUENCE [LARGE SCALE GENOMIC DNA]</scope>
    <source>
        <strain>ATCC 27184 / PCC 6803 / Kazusa</strain>
    </source>
</reference>
<reference key="2">
    <citation type="journal article" date="2004" name="Mol. Microbiol.">
        <title>Function and regulation of the cyanobacterial genes lexA, recA and ruvB: LexA is critical to the survival of cells facing inorganic carbon starvation.</title>
        <authorList>
            <person name="Domain F."/>
            <person name="Houot L."/>
            <person name="Chauvat F."/>
            <person name="Cassier-Chauvat C."/>
        </authorList>
    </citation>
    <scope>DISCUSSION OF SOS REGULON</scope>
    <source>
        <strain>ATCC 27184 / PCC 6803 / Kazusa</strain>
    </source>
</reference>
<accession>P73532</accession>
<comment type="function">
    <text evidence="1">The RecF protein is involved in DNA metabolism; it is required for DNA replication. RecF binds preferentially to single-stranded, linear DNA. It also seems to bind ATP (By similarity).</text>
</comment>
<comment type="subcellular location">
    <subcellularLocation>
        <location evidence="1">Cytoplasm</location>
    </subcellularLocation>
</comment>
<comment type="miscellaneous">
    <text evidence="4">This bacterium is considerably more resistant to UV and gamma irradiation than E.coli; the E.coli-like SOS regulon model is not an appropriate model for DNA repair in this cyanobacterium.</text>
</comment>
<comment type="similarity">
    <text evidence="3">Belongs to the RecF family.</text>
</comment>